<keyword id="KW-0028">Amino-acid biosynthesis</keyword>
<keyword id="KW-0963">Cytoplasm</keyword>
<keyword id="KW-0315">Glutamine amidotransferase</keyword>
<keyword id="KW-0368">Histidine biosynthesis</keyword>
<keyword id="KW-0378">Hydrolase</keyword>
<keyword id="KW-0456">Lyase</keyword>
<keyword id="KW-1185">Reference proteome</keyword>
<reference key="1">
    <citation type="journal article" date="2007" name="J. Bacteriol.">
        <title>Genome sequence analysis of the emerging human pathogenic acetic acid bacterium Granulibacter bethesdensis.</title>
        <authorList>
            <person name="Greenberg D.E."/>
            <person name="Porcella S.F."/>
            <person name="Zelazny A.M."/>
            <person name="Virtaneva K."/>
            <person name="Sturdevant D.E."/>
            <person name="Kupko J.J. III"/>
            <person name="Barbian K.D."/>
            <person name="Babar A."/>
            <person name="Dorward D.W."/>
            <person name="Holland S.M."/>
        </authorList>
    </citation>
    <scope>NUCLEOTIDE SEQUENCE [LARGE SCALE GENOMIC DNA]</scope>
    <source>
        <strain>ATCC BAA-1260 / CGDNIH1</strain>
    </source>
</reference>
<evidence type="ECO:0000255" key="1">
    <source>
        <dbReference type="HAMAP-Rule" id="MF_00278"/>
    </source>
</evidence>
<gene>
    <name evidence="1" type="primary">hisH</name>
    <name type="ordered locus">GbCGDNIH1_2233</name>
</gene>
<organism>
    <name type="scientific">Granulibacter bethesdensis (strain ATCC BAA-1260 / CGDNIH1)</name>
    <dbReference type="NCBI Taxonomy" id="391165"/>
    <lineage>
        <taxon>Bacteria</taxon>
        <taxon>Pseudomonadati</taxon>
        <taxon>Pseudomonadota</taxon>
        <taxon>Alphaproteobacteria</taxon>
        <taxon>Acetobacterales</taxon>
        <taxon>Acetobacteraceae</taxon>
        <taxon>Granulibacter</taxon>
    </lineage>
</organism>
<accession>Q0BPX1</accession>
<dbReference type="EC" id="4.3.2.10" evidence="1"/>
<dbReference type="EC" id="3.5.1.2" evidence="1"/>
<dbReference type="EMBL" id="CP000394">
    <property type="protein sequence ID" value="ABI63131.1"/>
    <property type="molecule type" value="Genomic_DNA"/>
</dbReference>
<dbReference type="RefSeq" id="WP_011632933.1">
    <property type="nucleotide sequence ID" value="NC_008343.2"/>
</dbReference>
<dbReference type="SMR" id="Q0BPX1"/>
<dbReference type="STRING" id="391165.GbCGDNIH1_2233"/>
<dbReference type="KEGG" id="gbe:GbCGDNIH1_2233"/>
<dbReference type="eggNOG" id="COG0118">
    <property type="taxonomic scope" value="Bacteria"/>
</dbReference>
<dbReference type="HOGENOM" id="CLU_071837_2_0_5"/>
<dbReference type="OrthoDB" id="9807137at2"/>
<dbReference type="UniPathway" id="UPA00031">
    <property type="reaction ID" value="UER00010"/>
</dbReference>
<dbReference type="Proteomes" id="UP000001963">
    <property type="component" value="Chromosome"/>
</dbReference>
<dbReference type="GO" id="GO:0005737">
    <property type="term" value="C:cytoplasm"/>
    <property type="evidence" value="ECO:0007669"/>
    <property type="project" value="UniProtKB-SubCell"/>
</dbReference>
<dbReference type="GO" id="GO:0004359">
    <property type="term" value="F:glutaminase activity"/>
    <property type="evidence" value="ECO:0007669"/>
    <property type="project" value="UniProtKB-EC"/>
</dbReference>
<dbReference type="GO" id="GO:0000107">
    <property type="term" value="F:imidazoleglycerol-phosphate synthase activity"/>
    <property type="evidence" value="ECO:0007669"/>
    <property type="project" value="UniProtKB-UniRule"/>
</dbReference>
<dbReference type="GO" id="GO:0016829">
    <property type="term" value="F:lyase activity"/>
    <property type="evidence" value="ECO:0007669"/>
    <property type="project" value="UniProtKB-KW"/>
</dbReference>
<dbReference type="GO" id="GO:0000105">
    <property type="term" value="P:L-histidine biosynthetic process"/>
    <property type="evidence" value="ECO:0007669"/>
    <property type="project" value="UniProtKB-UniRule"/>
</dbReference>
<dbReference type="CDD" id="cd01748">
    <property type="entry name" value="GATase1_IGP_Synthase"/>
    <property type="match status" value="1"/>
</dbReference>
<dbReference type="Gene3D" id="3.40.50.880">
    <property type="match status" value="1"/>
</dbReference>
<dbReference type="HAMAP" id="MF_00278">
    <property type="entry name" value="HisH"/>
    <property type="match status" value="1"/>
</dbReference>
<dbReference type="InterPro" id="IPR029062">
    <property type="entry name" value="Class_I_gatase-like"/>
</dbReference>
<dbReference type="InterPro" id="IPR017926">
    <property type="entry name" value="GATASE"/>
</dbReference>
<dbReference type="InterPro" id="IPR010139">
    <property type="entry name" value="Imidazole-glycPsynth_HisH"/>
</dbReference>
<dbReference type="NCBIfam" id="TIGR01855">
    <property type="entry name" value="IMP_synth_hisH"/>
    <property type="match status" value="1"/>
</dbReference>
<dbReference type="PANTHER" id="PTHR42701">
    <property type="entry name" value="IMIDAZOLE GLYCEROL PHOSPHATE SYNTHASE SUBUNIT HISH"/>
    <property type="match status" value="1"/>
</dbReference>
<dbReference type="PANTHER" id="PTHR42701:SF1">
    <property type="entry name" value="IMIDAZOLE GLYCEROL PHOSPHATE SYNTHASE SUBUNIT HISH"/>
    <property type="match status" value="1"/>
</dbReference>
<dbReference type="Pfam" id="PF00117">
    <property type="entry name" value="GATase"/>
    <property type="match status" value="1"/>
</dbReference>
<dbReference type="PIRSF" id="PIRSF000495">
    <property type="entry name" value="Amidotransf_hisH"/>
    <property type="match status" value="1"/>
</dbReference>
<dbReference type="SUPFAM" id="SSF52317">
    <property type="entry name" value="Class I glutamine amidotransferase-like"/>
    <property type="match status" value="1"/>
</dbReference>
<dbReference type="PROSITE" id="PS51273">
    <property type="entry name" value="GATASE_TYPE_1"/>
    <property type="match status" value="1"/>
</dbReference>
<sequence>MKVVVIDSGTGNLASARRGLEIAAGRAGLDAKVIASADPLDVRNADRIVLPGQGAFADCARGIAAIEGMRGAIEEGVAAGKPFLGICVGMQLMAERGLEHEGAPGFGWIKGEIAPISCPGLRLPQMGWNGLDFTSTGCVHPLLNGLQADDHAYFVHGYALRDGDQAQILATTEYGGPVVAMVASGNRAGTQFHVEKSQEVGLRILQNFMVWTPEGTSGS</sequence>
<comment type="function">
    <text evidence="1">IGPS catalyzes the conversion of PRFAR and glutamine to IGP, AICAR and glutamate. The HisH subunit catalyzes the hydrolysis of glutamine to glutamate and ammonia as part of the synthesis of IGP and AICAR. The resulting ammonia molecule is channeled to the active site of HisF.</text>
</comment>
<comment type="catalytic activity">
    <reaction evidence="1">
        <text>5-[(5-phospho-1-deoxy-D-ribulos-1-ylimino)methylamino]-1-(5-phospho-beta-D-ribosyl)imidazole-4-carboxamide + L-glutamine = D-erythro-1-(imidazol-4-yl)glycerol 3-phosphate + 5-amino-1-(5-phospho-beta-D-ribosyl)imidazole-4-carboxamide + L-glutamate + H(+)</text>
        <dbReference type="Rhea" id="RHEA:24793"/>
        <dbReference type="ChEBI" id="CHEBI:15378"/>
        <dbReference type="ChEBI" id="CHEBI:29985"/>
        <dbReference type="ChEBI" id="CHEBI:58278"/>
        <dbReference type="ChEBI" id="CHEBI:58359"/>
        <dbReference type="ChEBI" id="CHEBI:58475"/>
        <dbReference type="ChEBI" id="CHEBI:58525"/>
        <dbReference type="EC" id="4.3.2.10"/>
    </reaction>
</comment>
<comment type="catalytic activity">
    <reaction evidence="1">
        <text>L-glutamine + H2O = L-glutamate + NH4(+)</text>
        <dbReference type="Rhea" id="RHEA:15889"/>
        <dbReference type="ChEBI" id="CHEBI:15377"/>
        <dbReference type="ChEBI" id="CHEBI:28938"/>
        <dbReference type="ChEBI" id="CHEBI:29985"/>
        <dbReference type="ChEBI" id="CHEBI:58359"/>
        <dbReference type="EC" id="3.5.1.2"/>
    </reaction>
</comment>
<comment type="pathway">
    <text evidence="1">Amino-acid biosynthesis; L-histidine biosynthesis; L-histidine from 5-phospho-alpha-D-ribose 1-diphosphate: step 5/9.</text>
</comment>
<comment type="subunit">
    <text evidence="1">Heterodimer of HisH and HisF.</text>
</comment>
<comment type="subcellular location">
    <subcellularLocation>
        <location evidence="1">Cytoplasm</location>
    </subcellularLocation>
</comment>
<name>HIS5_GRABC</name>
<feature type="chain" id="PRO_1000114780" description="Imidazole glycerol phosphate synthase subunit HisH">
    <location>
        <begin position="1"/>
        <end position="219"/>
    </location>
</feature>
<feature type="domain" description="Glutamine amidotransferase type-1" evidence="1">
    <location>
        <begin position="2"/>
        <end position="218"/>
    </location>
</feature>
<feature type="active site" description="Nucleophile" evidence="1">
    <location>
        <position position="87"/>
    </location>
</feature>
<feature type="active site" evidence="1">
    <location>
        <position position="193"/>
    </location>
</feature>
<feature type="active site" evidence="1">
    <location>
        <position position="195"/>
    </location>
</feature>
<proteinExistence type="inferred from homology"/>
<protein>
    <recommendedName>
        <fullName evidence="1">Imidazole glycerol phosphate synthase subunit HisH</fullName>
        <ecNumber evidence="1">4.3.2.10</ecNumber>
    </recommendedName>
    <alternativeName>
        <fullName evidence="1">IGP synthase glutaminase subunit</fullName>
        <ecNumber evidence="1">3.5.1.2</ecNumber>
    </alternativeName>
    <alternativeName>
        <fullName evidence="1">IGP synthase subunit HisH</fullName>
    </alternativeName>
    <alternativeName>
        <fullName evidence="1">ImGP synthase subunit HisH</fullName>
        <shortName evidence="1">IGPS subunit HisH</shortName>
    </alternativeName>
</protein>